<sequence length="748" mass="85123">MLWTLPVCLLSLSFSAHIAAVSIQHLSTGHDHDDVDVGEQQKDISEINSAAGLNLFQGDILLPRTRNALRDPSSRWKLPIPYILADNLDLNAKGAILNAFEMFRLKSCVDFKPYEGESSYIIFQQFSGCWSMVGDQHVGQNISIGEGCDYKAIIEHEILHALGFFHEQSRTDRDDYVNIWWNEIMTDYEHNFNTYDDKTITDLNTPYDYESLMHYGPFSFNKNETIPTITTKIPEFNAIIGQRLDFSATDLTRLNRMYNCTRTHTLLDHCAFEKTNICGMIQGTRDDADWVHEDSSQPGQVDHTLVGRCKAAGYFMYFNTSSGVTGEVALLESRILYPKRKQQCLQFFYKMTGSPADRLLIWVRRDDNTGNVCQLAKIQTFQGDSDHNWKIAHVTLNEEKKFRYVFQGTKGDPGNSDGGIYLDDITLTETPCPTGVWTIRNISQVLENTVKGDRLVSPRFYNSEGYGFGVTLYPNGRITSNSGYLGLAFHLYSGDNDVILEWPVENRQAIMTILDQEPDARNRMSLSLMFTTSKYQTSSAINGSVIWDRPTKVGVYDKDCDCFRSIDWGWGQAISHQMLMRRNFLKDDTLIIFVDFKDLTHLRQTEVPIPSRSVIPRGLLLQGQEPLALGDSRIAMMEESLPRRLDQRQPSRPKRSVENTGPMEDHNWPQYFRDPCDPNPCQNEGTCVNVKGMASCRCVSGHAFFYTGERCQAMHVHGSLLGLLIGCITALIFLTFITFSNTYQKLRQ</sequence>
<gene>
    <name type="primary">Mep1a</name>
</gene>
<evidence type="ECO:0000250" key="1"/>
<evidence type="ECO:0000255" key="2"/>
<evidence type="ECO:0000255" key="3">
    <source>
        <dbReference type="PROSITE-ProRule" id="PRU00076"/>
    </source>
</evidence>
<evidence type="ECO:0000255" key="4">
    <source>
        <dbReference type="PROSITE-ProRule" id="PRU00128"/>
    </source>
</evidence>
<evidence type="ECO:0000255" key="5">
    <source>
        <dbReference type="PROSITE-ProRule" id="PRU00129"/>
    </source>
</evidence>
<evidence type="ECO:0000255" key="6">
    <source>
        <dbReference type="PROSITE-ProRule" id="PRU01211"/>
    </source>
</evidence>
<evidence type="ECO:0000256" key="7">
    <source>
        <dbReference type="SAM" id="MobiDB-lite"/>
    </source>
</evidence>
<evidence type="ECO:0000269" key="8">
    <source>
    </source>
</evidence>
<evidence type="ECO:0000305" key="9"/>
<name>MEP1A_RAT</name>
<keyword id="KW-1015">Disulfide bond</keyword>
<keyword id="KW-0245">EGF-like domain</keyword>
<keyword id="KW-0325">Glycoprotein</keyword>
<keyword id="KW-0378">Hydrolase</keyword>
<keyword id="KW-0472">Membrane</keyword>
<keyword id="KW-0479">Metal-binding</keyword>
<keyword id="KW-0482">Metalloprotease</keyword>
<keyword id="KW-0645">Protease</keyword>
<keyword id="KW-1185">Reference proteome</keyword>
<keyword id="KW-0732">Signal</keyword>
<keyword id="KW-0812">Transmembrane</keyword>
<keyword id="KW-1133">Transmembrane helix</keyword>
<keyword id="KW-0862">Zinc</keyword>
<keyword id="KW-0865">Zymogen</keyword>
<reference key="1">
    <citation type="journal article" date="1992" name="FEBS Lett.">
        <title>Molecular cloning of the alpha-subunit of rat endopeptidase-24.18 (endopeptidase-2) and co-localization with endopeptidase-24.11 in rat kidney by in situ hybridization.</title>
        <authorList>
            <person name="Corbeil D."/>
            <person name="Gaudoux F."/>
            <person name="Wainwright S."/>
            <person name="Ingram J."/>
            <person name="Kenny A.J."/>
            <person name="Boileau G."/>
            <person name="Crine P."/>
        </authorList>
    </citation>
    <scope>NUCLEOTIDE SEQUENCE [MRNA]</scope>
    <source>
        <tissue>Kidney</tissue>
    </source>
</reference>
<reference key="2">
    <citation type="journal article" date="2004" name="Genome Res.">
        <title>The status, quality, and expansion of the NIH full-length cDNA project: the Mammalian Gene Collection (MGC).</title>
        <authorList>
            <consortium name="The MGC Project Team"/>
        </authorList>
    </citation>
    <scope>NUCLEOTIDE SEQUENCE [LARGE SCALE MRNA]</scope>
    <source>
        <strain>Brown Norway</strain>
        <tissue>Kidney</tissue>
    </source>
</reference>
<reference key="3">
    <citation type="journal article" date="1996" name="Biochem. J.">
        <title>Identification of the cysteine residues implicated in the formation of alpha 2 and alpha/beta dimers of rat meprin.</title>
        <authorList>
            <person name="Chevallier S."/>
            <person name="Ahn J."/>
            <person name="Boileau G."/>
            <person name="Crine P."/>
        </authorList>
    </citation>
    <scope>INTERCHAIN DISULFIDE BOND</scope>
</reference>
<reference key="4">
    <citation type="journal article" date="2007" name="Biol. Chem.">
        <title>Human and mouse homo-oligomeric meprin A metalloendopeptidase: substrate and inhibitor specificities.</title>
        <authorList>
            <person name="Bylander J.E."/>
            <person name="Bertenshaw G.P."/>
            <person name="Matters G.L."/>
            <person name="Hubbard S.J."/>
            <person name="Bond J.S."/>
        </authorList>
    </citation>
    <scope>ACTIVITY REGULATION</scope>
</reference>
<dbReference type="EC" id="3.4.24.18"/>
<dbReference type="EMBL" id="S43408">
    <property type="protein sequence ID" value="AAB23030.1"/>
    <property type="molecule type" value="mRNA"/>
</dbReference>
<dbReference type="EMBL" id="BC081834">
    <property type="protein sequence ID" value="AAH81834.1"/>
    <property type="molecule type" value="mRNA"/>
</dbReference>
<dbReference type="PIR" id="S24134">
    <property type="entry name" value="S24134"/>
</dbReference>
<dbReference type="RefSeq" id="NP_037275.1">
    <property type="nucleotide sequence ID" value="NM_013143.1"/>
</dbReference>
<dbReference type="SMR" id="Q64230"/>
<dbReference type="FunCoup" id="Q64230">
    <property type="interactions" value="87"/>
</dbReference>
<dbReference type="STRING" id="10116.ENSRNOP00000014791"/>
<dbReference type="MEROPS" id="M12.002"/>
<dbReference type="GlyCosmos" id="Q64230">
    <property type="glycosylation" value="6 sites, No reported glycans"/>
</dbReference>
<dbReference type="GlyGen" id="Q64230">
    <property type="glycosylation" value="6 sites"/>
</dbReference>
<dbReference type="iPTMnet" id="Q64230"/>
<dbReference type="PhosphoSitePlus" id="Q64230"/>
<dbReference type="PaxDb" id="10116-ENSRNOP00000014791"/>
<dbReference type="Ensembl" id="ENSRNOT00000014791.8">
    <property type="protein sequence ID" value="ENSRNOP00000014791.5"/>
    <property type="gene ID" value="ENSRNOG00000011022.8"/>
</dbReference>
<dbReference type="GeneID" id="25684"/>
<dbReference type="KEGG" id="rno:25684"/>
<dbReference type="UCSC" id="RGD:3080">
    <property type="organism name" value="rat"/>
</dbReference>
<dbReference type="AGR" id="RGD:3080"/>
<dbReference type="CTD" id="4224"/>
<dbReference type="RGD" id="3080">
    <property type="gene designation" value="Mep1a"/>
</dbReference>
<dbReference type="eggNOG" id="KOG3714">
    <property type="taxonomic scope" value="Eukaryota"/>
</dbReference>
<dbReference type="GeneTree" id="ENSGT00950000183111"/>
<dbReference type="HOGENOM" id="CLU_021966_1_0_1"/>
<dbReference type="InParanoid" id="Q64230"/>
<dbReference type="OMA" id="FEMFRLR"/>
<dbReference type="OrthoDB" id="51647at9989"/>
<dbReference type="PhylomeDB" id="Q64230"/>
<dbReference type="BRENDA" id="3.4.24.18">
    <property type="organism ID" value="5301"/>
</dbReference>
<dbReference type="PRO" id="PR:Q64230"/>
<dbReference type="Proteomes" id="UP000002494">
    <property type="component" value="Chromosome 9"/>
</dbReference>
<dbReference type="Bgee" id="ENSRNOG00000011022">
    <property type="expression patterns" value="Expressed in jejunum and 13 other cell types or tissues"/>
</dbReference>
<dbReference type="GO" id="GO:0016020">
    <property type="term" value="C:membrane"/>
    <property type="evidence" value="ECO:0000266"/>
    <property type="project" value="RGD"/>
</dbReference>
<dbReference type="GO" id="GO:0017090">
    <property type="term" value="C:meprin A complex"/>
    <property type="evidence" value="ECO:0000314"/>
    <property type="project" value="RGD"/>
</dbReference>
<dbReference type="GO" id="GO:0005886">
    <property type="term" value="C:plasma membrane"/>
    <property type="evidence" value="ECO:0000266"/>
    <property type="project" value="RGD"/>
</dbReference>
<dbReference type="GO" id="GO:0070573">
    <property type="term" value="F:metallodipeptidase activity"/>
    <property type="evidence" value="ECO:0000266"/>
    <property type="project" value="RGD"/>
</dbReference>
<dbReference type="GO" id="GO:0004222">
    <property type="term" value="F:metalloendopeptidase activity"/>
    <property type="evidence" value="ECO:0000318"/>
    <property type="project" value="GO_Central"/>
</dbReference>
<dbReference type="GO" id="GO:0008237">
    <property type="term" value="F:metallopeptidase activity"/>
    <property type="evidence" value="ECO:0000266"/>
    <property type="project" value="RGD"/>
</dbReference>
<dbReference type="GO" id="GO:0008270">
    <property type="term" value="F:zinc ion binding"/>
    <property type="evidence" value="ECO:0007669"/>
    <property type="project" value="InterPro"/>
</dbReference>
<dbReference type="GO" id="GO:0038004">
    <property type="term" value="P:epidermal growth factor receptor ligand maturation"/>
    <property type="evidence" value="ECO:0000266"/>
    <property type="project" value="RGD"/>
</dbReference>
<dbReference type="GO" id="GO:0006508">
    <property type="term" value="P:proteolysis"/>
    <property type="evidence" value="ECO:0000303"/>
    <property type="project" value="RGD"/>
</dbReference>
<dbReference type="GO" id="GO:0140448">
    <property type="term" value="P:signaling receptor ligand precursor processing"/>
    <property type="evidence" value="ECO:0000266"/>
    <property type="project" value="RGD"/>
</dbReference>
<dbReference type="CDD" id="cd00054">
    <property type="entry name" value="EGF_CA"/>
    <property type="match status" value="1"/>
</dbReference>
<dbReference type="CDD" id="cd06263">
    <property type="entry name" value="MAM"/>
    <property type="match status" value="1"/>
</dbReference>
<dbReference type="FunFam" id="2.10.25.10:FF:000930">
    <property type="entry name" value="Meprin A subunit"/>
    <property type="match status" value="1"/>
</dbReference>
<dbReference type="FunFam" id="2.60.120.200:FF:000037">
    <property type="entry name" value="Meprin A subunit"/>
    <property type="match status" value="1"/>
</dbReference>
<dbReference type="FunFam" id="2.60.210.10:FF:000009">
    <property type="entry name" value="Meprin A subunit"/>
    <property type="match status" value="1"/>
</dbReference>
<dbReference type="FunFam" id="3.40.390.10:FF:000015">
    <property type="entry name" value="Meprin A subunit"/>
    <property type="match status" value="1"/>
</dbReference>
<dbReference type="Gene3D" id="2.60.120.200">
    <property type="match status" value="1"/>
</dbReference>
<dbReference type="Gene3D" id="2.60.210.10">
    <property type="entry name" value="Apoptosis, Tumor Necrosis Factor Receptor Associated Protein 2, Chain A"/>
    <property type="match status" value="1"/>
</dbReference>
<dbReference type="Gene3D" id="3.40.390.10">
    <property type="entry name" value="Collagenase (Catalytic Domain)"/>
    <property type="match status" value="1"/>
</dbReference>
<dbReference type="Gene3D" id="2.10.25.10">
    <property type="entry name" value="Laminin"/>
    <property type="match status" value="1"/>
</dbReference>
<dbReference type="InterPro" id="IPR013320">
    <property type="entry name" value="ConA-like_dom_sf"/>
</dbReference>
<dbReference type="InterPro" id="IPR000742">
    <property type="entry name" value="EGF-like_dom"/>
</dbReference>
<dbReference type="InterPro" id="IPR000998">
    <property type="entry name" value="MAM_dom"/>
</dbReference>
<dbReference type="InterPro" id="IPR002083">
    <property type="entry name" value="MATH/TRAF_dom"/>
</dbReference>
<dbReference type="InterPro" id="IPR008294">
    <property type="entry name" value="Meprin"/>
</dbReference>
<dbReference type="InterPro" id="IPR024079">
    <property type="entry name" value="MetalloPept_cat_dom_sf"/>
</dbReference>
<dbReference type="InterPro" id="IPR001506">
    <property type="entry name" value="Peptidase_M12A"/>
</dbReference>
<dbReference type="InterPro" id="IPR006026">
    <property type="entry name" value="Peptidase_Metallo"/>
</dbReference>
<dbReference type="InterPro" id="IPR008974">
    <property type="entry name" value="TRAF-like"/>
</dbReference>
<dbReference type="PANTHER" id="PTHR10127">
    <property type="entry name" value="DISCOIDIN, CUB, EGF, LAMININ , AND ZINC METALLOPROTEASE DOMAIN CONTAINING"/>
    <property type="match status" value="1"/>
</dbReference>
<dbReference type="PANTHER" id="PTHR10127:SF824">
    <property type="entry name" value="MEPRIN A SUBUNIT ALPHA"/>
    <property type="match status" value="1"/>
</dbReference>
<dbReference type="Pfam" id="PF01400">
    <property type="entry name" value="Astacin"/>
    <property type="match status" value="1"/>
</dbReference>
<dbReference type="Pfam" id="PF00008">
    <property type="entry name" value="EGF"/>
    <property type="match status" value="1"/>
</dbReference>
<dbReference type="Pfam" id="PF00629">
    <property type="entry name" value="MAM"/>
    <property type="match status" value="1"/>
</dbReference>
<dbReference type="Pfam" id="PF22486">
    <property type="entry name" value="MATH_2"/>
    <property type="match status" value="1"/>
</dbReference>
<dbReference type="PIRSF" id="PIRSF001196">
    <property type="entry name" value="Meprin"/>
    <property type="match status" value="1"/>
</dbReference>
<dbReference type="PRINTS" id="PR00480">
    <property type="entry name" value="ASTACIN"/>
</dbReference>
<dbReference type="PRINTS" id="PR00020">
    <property type="entry name" value="MAMDOMAIN"/>
</dbReference>
<dbReference type="SMART" id="SM00137">
    <property type="entry name" value="MAM"/>
    <property type="match status" value="1"/>
</dbReference>
<dbReference type="SMART" id="SM00061">
    <property type="entry name" value="MATH"/>
    <property type="match status" value="1"/>
</dbReference>
<dbReference type="SMART" id="SM00235">
    <property type="entry name" value="ZnMc"/>
    <property type="match status" value="1"/>
</dbReference>
<dbReference type="SUPFAM" id="SSF49899">
    <property type="entry name" value="Concanavalin A-like lectins/glucanases"/>
    <property type="match status" value="1"/>
</dbReference>
<dbReference type="SUPFAM" id="SSF57196">
    <property type="entry name" value="EGF/Laminin"/>
    <property type="match status" value="1"/>
</dbReference>
<dbReference type="SUPFAM" id="SSF55486">
    <property type="entry name" value="Metalloproteases ('zincins'), catalytic domain"/>
    <property type="match status" value="1"/>
</dbReference>
<dbReference type="SUPFAM" id="SSF49599">
    <property type="entry name" value="TRAF domain-like"/>
    <property type="match status" value="1"/>
</dbReference>
<dbReference type="PROSITE" id="PS51864">
    <property type="entry name" value="ASTACIN"/>
    <property type="match status" value="1"/>
</dbReference>
<dbReference type="PROSITE" id="PS50026">
    <property type="entry name" value="EGF_3"/>
    <property type="match status" value="1"/>
</dbReference>
<dbReference type="PROSITE" id="PS00740">
    <property type="entry name" value="MAM_1"/>
    <property type="match status" value="1"/>
</dbReference>
<dbReference type="PROSITE" id="PS50060">
    <property type="entry name" value="MAM_2"/>
    <property type="match status" value="1"/>
</dbReference>
<dbReference type="PROSITE" id="PS50144">
    <property type="entry name" value="MATH"/>
    <property type="match status" value="1"/>
</dbReference>
<dbReference type="PROSITE" id="PS00142">
    <property type="entry name" value="ZINC_PROTEASE"/>
    <property type="match status" value="1"/>
</dbReference>
<comment type="catalytic activity">
    <reaction>
        <text>Hydrolysis of protein and peptide substrates preferentially on carboxyl side of hydrophobic residues.</text>
        <dbReference type="EC" id="3.4.24.18"/>
    </reaction>
</comment>
<comment type="cofactor">
    <cofactor evidence="6">
        <name>Zn(2+)</name>
        <dbReference type="ChEBI" id="CHEBI:29105"/>
    </cofactor>
    <text evidence="6">Binds 1 zinc ion per subunit.</text>
</comment>
<comment type="activity regulation">
    <text evidence="8">Inhibited by actinonin.</text>
</comment>
<comment type="subunit">
    <text evidence="1">Homotetramer consisting of disulfide-linked alpha subunits, homooligomer consisting of disulfide-linked alpha subunit homodimers, or heterotetramer of two alpha and two beta subunits formed by non-covalent association of two disulfide-linked heterodimers (By similarity). Interacts with MBL2 through its carbohydrate moiety. This interaction may inhibit its catalytic activity (By similarity).</text>
</comment>
<comment type="subcellular location">
    <subcellularLocation>
        <location>Membrane</location>
        <topology>Single-pass type I membrane protein</topology>
    </subcellularLocation>
</comment>
<comment type="tissue specificity">
    <text>Colocalized with E-24.11 in proximal tubules of juxtamedullary nephrons.</text>
</comment>
<comment type="PTM">
    <text evidence="1">N-glycosylated; contains GlcNAc, galactose, mannose and a small amount of fucose.</text>
</comment>
<organism>
    <name type="scientific">Rattus norvegicus</name>
    <name type="common">Rat</name>
    <dbReference type="NCBI Taxonomy" id="10116"/>
    <lineage>
        <taxon>Eukaryota</taxon>
        <taxon>Metazoa</taxon>
        <taxon>Chordata</taxon>
        <taxon>Craniata</taxon>
        <taxon>Vertebrata</taxon>
        <taxon>Euteleostomi</taxon>
        <taxon>Mammalia</taxon>
        <taxon>Eutheria</taxon>
        <taxon>Euarchontoglires</taxon>
        <taxon>Glires</taxon>
        <taxon>Rodentia</taxon>
        <taxon>Myomorpha</taxon>
        <taxon>Muroidea</taxon>
        <taxon>Muridae</taxon>
        <taxon>Murinae</taxon>
        <taxon>Rattus</taxon>
    </lineage>
</organism>
<proteinExistence type="evidence at protein level"/>
<feature type="signal peptide" evidence="1">
    <location>
        <begin position="1"/>
        <end position="20"/>
    </location>
</feature>
<feature type="propeptide" id="PRO_0000028881" evidence="1">
    <location>
        <begin position="21"/>
        <end position="66"/>
    </location>
</feature>
<feature type="chain" id="PRO_0000028882" description="Meprin A subunit alpha">
    <location>
        <begin position="67"/>
        <end position="748"/>
    </location>
</feature>
<feature type="topological domain" description="Extracellular" evidence="2">
    <location>
        <begin position="67"/>
        <end position="719"/>
    </location>
</feature>
<feature type="transmembrane region" description="Helical" evidence="2">
    <location>
        <begin position="720"/>
        <end position="739"/>
    </location>
</feature>
<feature type="topological domain" description="Cytoplasmic" evidence="2">
    <location>
        <begin position="740"/>
        <end position="748"/>
    </location>
</feature>
<feature type="domain" description="Peptidase M12A" evidence="6">
    <location>
        <begin position="67"/>
        <end position="261"/>
    </location>
</feature>
<feature type="domain" description="MAM" evidence="4">
    <location>
        <begin position="265"/>
        <end position="434"/>
    </location>
</feature>
<feature type="domain" description="MATH" evidence="5">
    <location>
        <begin position="435"/>
        <end position="596"/>
    </location>
</feature>
<feature type="domain" description="EGF-like" evidence="3">
    <location>
        <begin position="672"/>
        <end position="712"/>
    </location>
</feature>
<feature type="region of interest" description="Disordered" evidence="7">
    <location>
        <begin position="641"/>
        <end position="668"/>
    </location>
</feature>
<feature type="active site" evidence="6">
    <location>
        <position position="157"/>
    </location>
</feature>
<feature type="binding site" evidence="6">
    <location>
        <position position="156"/>
    </location>
    <ligand>
        <name>Zn(2+)</name>
        <dbReference type="ChEBI" id="CHEBI:29105"/>
        <note>catalytic</note>
    </ligand>
</feature>
<feature type="binding site" evidence="6">
    <location>
        <position position="160"/>
    </location>
    <ligand>
        <name>Zn(2+)</name>
        <dbReference type="ChEBI" id="CHEBI:29105"/>
        <note>catalytic</note>
    </ligand>
</feature>
<feature type="binding site" evidence="6">
    <location>
        <position position="166"/>
    </location>
    <ligand>
        <name>Zn(2+)</name>
        <dbReference type="ChEBI" id="CHEBI:29105"/>
        <note>catalytic</note>
    </ligand>
</feature>
<feature type="glycosylation site" description="N-linked (GlcNAc...) asparagine" evidence="2">
    <location>
        <position position="141"/>
    </location>
</feature>
<feature type="glycosylation site" description="N-linked (GlcNAc...) asparagine" evidence="2">
    <location>
        <position position="223"/>
    </location>
</feature>
<feature type="glycosylation site" description="N-linked (GlcNAc...) asparagine" evidence="2">
    <location>
        <position position="259"/>
    </location>
</feature>
<feature type="glycosylation site" description="N-linked (GlcNAc...) asparagine" evidence="2">
    <location>
        <position position="319"/>
    </location>
</feature>
<feature type="glycosylation site" description="N-linked (GlcNAc...) asparagine" evidence="2">
    <location>
        <position position="441"/>
    </location>
</feature>
<feature type="glycosylation site" description="N-linked (GlcNAc...) asparagine" evidence="2">
    <location>
        <position position="542"/>
    </location>
</feature>
<feature type="disulfide bond" evidence="6">
    <location>
        <begin position="108"/>
        <end position="260"/>
    </location>
</feature>
<feature type="disulfide bond" evidence="6">
    <location>
        <begin position="129"/>
        <end position="148"/>
    </location>
</feature>
<feature type="disulfide bond" evidence="3">
    <location>
        <begin position="270"/>
        <end position="432"/>
    </location>
</feature>
<feature type="disulfide bond" description="Interchain" evidence="3">
    <location>
        <position position="278"/>
    </location>
</feature>
<feature type="disulfide bond" description="Interchain">
    <location>
        <position position="309"/>
    </location>
</feature>
<feature type="disulfide bond" evidence="3">
    <location>
        <begin position="676"/>
        <end position="687"/>
    </location>
</feature>
<feature type="disulfide bond" evidence="3">
    <location>
        <begin position="681"/>
        <end position="696"/>
    </location>
</feature>
<feature type="disulfide bond" evidence="3">
    <location>
        <begin position="698"/>
        <end position="711"/>
    </location>
</feature>
<feature type="sequence conflict" description="In Ref. 1; AAB23030." evidence="9" ref="1">
    <original>L</original>
    <variation>P</variation>
    <location>
        <position position="78"/>
    </location>
</feature>
<feature type="sequence conflict" description="In Ref. 1; AAB23030." evidence="9" ref="1">
    <original>A</original>
    <variation>S</variation>
    <location>
        <position position="356"/>
    </location>
</feature>
<feature type="sequence conflict" description="In Ref. 1; AAB23030." evidence="9" ref="1">
    <original>C</original>
    <variation>R</variation>
    <location>
        <position position="373"/>
    </location>
</feature>
<feature type="sequence conflict" description="In Ref. 1; AAB23030." evidence="9" ref="1">
    <original>R</original>
    <variation>E</variation>
    <location>
        <position position="507"/>
    </location>
</feature>
<feature type="sequence conflict" description="In Ref. 1; AAB23030." evidence="9" ref="1">
    <original>P</original>
    <variation>S</variation>
    <location>
        <position position="610"/>
    </location>
</feature>
<accession>Q64230</accession>
<accession>Q642C9</accession>
<protein>
    <recommendedName>
        <fullName>Meprin A subunit alpha</fullName>
        <ecNumber>3.4.24.18</ecNumber>
    </recommendedName>
    <alternativeName>
        <fullName>Endopeptidase-2</fullName>
    </alternativeName>
    <alternativeName>
        <fullName>Endopeptidase-24.18 subunit alpha</fullName>
        <shortName>E-24.18</shortName>
    </alternativeName>
    <alternativeName>
        <fullName>MEP-1</fullName>
    </alternativeName>
</protein>